<sequence length="153" mass="18057">MKTKQLVASEEVYDFLKVIWPDYETESRYDNLSLIVCTLSDPDCVRWLSENMKFGDEKQLALMKEKYGWEVGDKLPEWLHSSYHRLLLIGELLESNLKLKKYTVEITETLSRLVSIEAENPDEAERLVREKYKSCEIVLDADDFQDYDTSIYE</sequence>
<organism>
    <name type="scientific">Streptococcus pneumoniae (strain ATCC BAA-255 / R6)</name>
    <dbReference type="NCBI Taxonomy" id="171101"/>
    <lineage>
        <taxon>Bacteria</taxon>
        <taxon>Bacillati</taxon>
        <taxon>Bacillota</taxon>
        <taxon>Bacilli</taxon>
        <taxon>Lactobacillales</taxon>
        <taxon>Streptococcaceae</taxon>
        <taxon>Streptococcus</taxon>
    </lineage>
</organism>
<accession>P0A3T5</accession>
<accession>P09359</accession>
<name>DPND_STRR6</name>
<keyword id="KW-1185">Reference proteome</keyword>
<keyword id="KW-0680">Restriction system</keyword>
<proteinExistence type="predicted"/>
<gene>
    <name type="primary">dpnD</name>
    <name type="ordered locus">spr1664</name>
</gene>
<feature type="chain" id="PRO_0000079992" description="Protein DpnD">
    <location>
        <begin position="1"/>
        <end position="153"/>
    </location>
</feature>
<protein>
    <recommendedName>
        <fullName>Protein DpnD</fullName>
    </recommendedName>
</protein>
<reference key="1">
    <citation type="journal article" date="2001" name="J. Bacteriol.">
        <title>Genome of the bacterium Streptococcus pneumoniae strain R6.</title>
        <authorList>
            <person name="Hoskins J."/>
            <person name="Alborn W.E. Jr."/>
            <person name="Arnold J."/>
            <person name="Blaszczak L.C."/>
            <person name="Burgett S."/>
            <person name="DeHoff B.S."/>
            <person name="Estrem S.T."/>
            <person name="Fritz L."/>
            <person name="Fu D.-J."/>
            <person name="Fuller W."/>
            <person name="Geringer C."/>
            <person name="Gilmour R."/>
            <person name="Glass J.S."/>
            <person name="Khoja H."/>
            <person name="Kraft A.R."/>
            <person name="Lagace R.E."/>
            <person name="LeBlanc D.J."/>
            <person name="Lee L.N."/>
            <person name="Lefkowitz E.J."/>
            <person name="Lu J."/>
            <person name="Matsushima P."/>
            <person name="McAhren S.M."/>
            <person name="McHenney M."/>
            <person name="McLeaster K."/>
            <person name="Mundy C.W."/>
            <person name="Nicas T.I."/>
            <person name="Norris F.H."/>
            <person name="O'Gara M."/>
            <person name="Peery R.B."/>
            <person name="Robertson G.T."/>
            <person name="Rockey P."/>
            <person name="Sun P.-M."/>
            <person name="Winkler M.E."/>
            <person name="Yang Y."/>
            <person name="Young-Bellido M."/>
            <person name="Zhao G."/>
            <person name="Zook C.A."/>
            <person name="Baltz R.H."/>
            <person name="Jaskunas S.R."/>
            <person name="Rosteck P.R. Jr."/>
            <person name="Skatrud P.L."/>
            <person name="Glass J.I."/>
        </authorList>
    </citation>
    <scope>NUCLEOTIDE SEQUENCE [LARGE SCALE GENOMIC DNA]</scope>
    <source>
        <strain>ATCC BAA-255 / R6</strain>
    </source>
</reference>
<dbReference type="EMBL" id="AE007317">
    <property type="protein sequence ID" value="AAL00467.1"/>
    <property type="molecule type" value="Genomic_DNA"/>
</dbReference>
<dbReference type="PIR" id="F98079">
    <property type="entry name" value="F98079"/>
</dbReference>
<dbReference type="RefSeq" id="NP_359256.1">
    <property type="nucleotide sequence ID" value="NC_003098.1"/>
</dbReference>
<dbReference type="RefSeq" id="WP_000850938.1">
    <property type="nucleotide sequence ID" value="NC_003098.1"/>
</dbReference>
<dbReference type="SMR" id="P0A3T5"/>
<dbReference type="STRING" id="171101.spr1664"/>
<dbReference type="KEGG" id="spr:spr1664"/>
<dbReference type="PATRIC" id="fig|171101.6.peg.1798"/>
<dbReference type="eggNOG" id="ENOG503045Z">
    <property type="taxonomic scope" value="Bacteria"/>
</dbReference>
<dbReference type="HOGENOM" id="CLU_1712251_0_0_9"/>
<dbReference type="Proteomes" id="UP000000586">
    <property type="component" value="Chromosome"/>
</dbReference>
<dbReference type="GO" id="GO:0009307">
    <property type="term" value="P:DNA restriction-modification system"/>
    <property type="evidence" value="ECO:0007669"/>
    <property type="project" value="UniProtKB-KW"/>
</dbReference>
<dbReference type="InterPro" id="IPR025575">
    <property type="entry name" value="DpnD/PcfM_C"/>
</dbReference>
<dbReference type="InterPro" id="IPR056487">
    <property type="entry name" value="DpnD_N"/>
</dbReference>
<dbReference type="Pfam" id="PF14207">
    <property type="entry name" value="DpnD-PcfM"/>
    <property type="match status" value="1"/>
</dbReference>
<dbReference type="Pfam" id="PF23117">
    <property type="entry name" value="DpnD_N"/>
    <property type="match status" value="1"/>
</dbReference>